<evidence type="ECO:0000250" key="1">
    <source>
        <dbReference type="UniProtKB" id="P15496"/>
    </source>
</evidence>
<evidence type="ECO:0000250" key="2">
    <source>
        <dbReference type="UniProtKB" id="Q13907"/>
    </source>
</evidence>
<evidence type="ECO:0000250" key="3">
    <source>
        <dbReference type="UniProtKB" id="Q46822"/>
    </source>
</evidence>
<evidence type="ECO:0000255" key="4">
    <source>
        <dbReference type="PROSITE-ProRule" id="PRU00794"/>
    </source>
</evidence>
<evidence type="ECO:0000303" key="5">
    <source>
    </source>
</evidence>
<evidence type="ECO:0000305" key="6"/>
<evidence type="ECO:0000305" key="7">
    <source>
    </source>
</evidence>
<sequence>MSTTTTTTNQPITAESMLRLFPDIDTSSAPLSGHDEEQIRLMDEVCIVLDEDDKPIGTASKKICHLMTNIDKGLLHRAFSVFLFNDKNELLLQQRATEKITFPDMWTNTCCSHPLHIPTETGSTLEDSIAGVKRAAQRKLEHELGIKKEQVPFEDFHFLTRIHYKAPSDGMWGEHEIDYILFIKANVDLDINKNEVRDTQYVTPESLKQQFDDPSLVFTPWFKLICNSMLFEWWQNLDSGLDKYLNEQEIRRM</sequence>
<keyword id="KW-0413">Isomerase</keyword>
<keyword id="KW-0414">Isoprene biosynthesis</keyword>
<keyword id="KW-0444">Lipid biosynthesis</keyword>
<keyword id="KW-0443">Lipid metabolism</keyword>
<keyword id="KW-0460">Magnesium</keyword>
<keyword id="KW-0479">Metal-binding</keyword>
<keyword id="KW-1185">Reference proteome</keyword>
<keyword id="KW-0752">Steroid biosynthesis</keyword>
<keyword id="KW-0753">Steroid metabolism</keyword>
<keyword id="KW-0756">Sterol biosynthesis</keyword>
<keyword id="KW-1207">Sterol metabolism</keyword>
<proteinExistence type="inferred from homology"/>
<accession>I1RZ92</accession>
<accession>A0A098DNL5</accession>
<protein>
    <recommendedName>
        <fullName evidence="6">Isopentenyl-diphosphate delta-isomerase IDI1</fullName>
        <ecNumber evidence="7">5.3.3.2</ecNumber>
    </recommendedName>
    <alternativeName>
        <fullName evidence="5">Ergosterol biosynthesis protein IDI1</fullName>
    </alternativeName>
    <alternativeName>
        <fullName evidence="5">Isopentenyl pyrophosphate isomerase IDI1</fullName>
        <shortName evidence="6">IPP isomerase</shortName>
    </alternativeName>
</protein>
<feature type="chain" id="PRO_0000454676" description="Isopentenyl-diphosphate delta-isomerase IDI1">
    <location>
        <begin position="1"/>
        <end position="253"/>
    </location>
</feature>
<feature type="domain" description="Nudix hydrolase" evidence="4">
    <location>
        <begin position="74"/>
        <end position="224"/>
    </location>
</feature>
<feature type="short sequence motif" description="Nudix box" evidence="4">
    <location>
        <begin position="112"/>
        <end position="145"/>
    </location>
</feature>
<feature type="active site" evidence="1">
    <location>
        <position position="111"/>
    </location>
</feature>
<feature type="active site" evidence="1">
    <location>
        <position position="176"/>
    </location>
</feature>
<feature type="binding site" evidence="2">
    <location>
        <position position="61"/>
    </location>
    <ligand>
        <name>substrate</name>
    </ligand>
</feature>
<feature type="binding site" evidence="3">
    <location>
        <position position="65"/>
    </location>
    <ligand>
        <name>Mg(2+)</name>
        <dbReference type="ChEBI" id="CHEBI:18420"/>
    </ligand>
</feature>
<feature type="binding site" evidence="3">
    <location>
        <position position="76"/>
    </location>
    <ligand>
        <name>Mg(2+)</name>
        <dbReference type="ChEBI" id="CHEBI:18420"/>
    </ligand>
</feature>
<feature type="binding site" evidence="2">
    <location>
        <position position="94"/>
    </location>
    <ligand>
        <name>substrate</name>
    </ligand>
</feature>
<feature type="binding site" evidence="2">
    <location>
        <position position="99"/>
    </location>
    <ligand>
        <name>substrate</name>
    </ligand>
</feature>
<feature type="binding site" evidence="2">
    <location>
        <position position="112"/>
    </location>
    <ligand>
        <name>substrate</name>
    </ligand>
</feature>
<feature type="binding site" evidence="3">
    <location>
        <position position="174"/>
    </location>
    <ligand>
        <name>Mg(2+)</name>
        <dbReference type="ChEBI" id="CHEBI:18420"/>
    </ligand>
</feature>
<feature type="binding site" evidence="3">
    <location>
        <position position="176"/>
    </location>
    <ligand>
        <name>Mg(2+)</name>
        <dbReference type="ChEBI" id="CHEBI:18420"/>
    </ligand>
</feature>
<name>IDI1_GIBZE</name>
<gene>
    <name evidence="5" type="primary">IDI1</name>
    <name type="ORF">FG09722</name>
    <name type="ORF">FGRAMPH1_01T26431</name>
</gene>
<reference key="1">
    <citation type="journal article" date="2007" name="Science">
        <title>The Fusarium graminearum genome reveals a link between localized polymorphism and pathogen specialization.</title>
        <authorList>
            <person name="Cuomo C.A."/>
            <person name="Gueldener U."/>
            <person name="Xu J.-R."/>
            <person name="Trail F."/>
            <person name="Turgeon B.G."/>
            <person name="Di Pietro A."/>
            <person name="Walton J.D."/>
            <person name="Ma L.-J."/>
            <person name="Baker S.E."/>
            <person name="Rep M."/>
            <person name="Adam G."/>
            <person name="Antoniw J."/>
            <person name="Baldwin T."/>
            <person name="Calvo S.E."/>
            <person name="Chang Y.-L."/>
            <person name="DeCaprio D."/>
            <person name="Gale L.R."/>
            <person name="Gnerre S."/>
            <person name="Goswami R.S."/>
            <person name="Hammond-Kosack K."/>
            <person name="Harris L.J."/>
            <person name="Hilburn K."/>
            <person name="Kennell J.C."/>
            <person name="Kroken S."/>
            <person name="Magnuson J.K."/>
            <person name="Mannhaupt G."/>
            <person name="Mauceli E.W."/>
            <person name="Mewes H.-W."/>
            <person name="Mitterbauer R."/>
            <person name="Muehlbauer G."/>
            <person name="Muensterkoetter M."/>
            <person name="Nelson D."/>
            <person name="O'Donnell K."/>
            <person name="Ouellet T."/>
            <person name="Qi W."/>
            <person name="Quesneville H."/>
            <person name="Roncero M.I.G."/>
            <person name="Seong K.-Y."/>
            <person name="Tetko I.V."/>
            <person name="Urban M."/>
            <person name="Waalwijk C."/>
            <person name="Ward T.J."/>
            <person name="Yao J."/>
            <person name="Birren B.W."/>
            <person name="Kistler H.C."/>
        </authorList>
    </citation>
    <scope>NUCLEOTIDE SEQUENCE [LARGE SCALE GENOMIC DNA]</scope>
    <source>
        <strain>ATCC MYA-4620 / CBS 123657 / FGSC 9075 / NRRL 31084 / PH-1</strain>
    </source>
</reference>
<reference key="2">
    <citation type="journal article" date="2010" name="Nature">
        <title>Comparative genomics reveals mobile pathogenicity chromosomes in Fusarium.</title>
        <authorList>
            <person name="Ma L.-J."/>
            <person name="van der Does H.C."/>
            <person name="Borkovich K.A."/>
            <person name="Coleman J.J."/>
            <person name="Daboussi M.-J."/>
            <person name="Di Pietro A."/>
            <person name="Dufresne M."/>
            <person name="Freitag M."/>
            <person name="Grabherr M."/>
            <person name="Henrissat B."/>
            <person name="Houterman P.M."/>
            <person name="Kang S."/>
            <person name="Shim W.-B."/>
            <person name="Woloshuk C."/>
            <person name="Xie X."/>
            <person name="Xu J.-R."/>
            <person name="Antoniw J."/>
            <person name="Baker S.E."/>
            <person name="Bluhm B.H."/>
            <person name="Breakspear A."/>
            <person name="Brown D.W."/>
            <person name="Butchko R.A.E."/>
            <person name="Chapman S."/>
            <person name="Coulson R."/>
            <person name="Coutinho P.M."/>
            <person name="Danchin E.G.J."/>
            <person name="Diener A."/>
            <person name="Gale L.R."/>
            <person name="Gardiner D.M."/>
            <person name="Goff S."/>
            <person name="Hammond-Kosack K.E."/>
            <person name="Hilburn K."/>
            <person name="Hua-Van A."/>
            <person name="Jonkers W."/>
            <person name="Kazan K."/>
            <person name="Kodira C.D."/>
            <person name="Koehrsen M."/>
            <person name="Kumar L."/>
            <person name="Lee Y.-H."/>
            <person name="Li L."/>
            <person name="Manners J.M."/>
            <person name="Miranda-Saavedra D."/>
            <person name="Mukherjee M."/>
            <person name="Park G."/>
            <person name="Park J."/>
            <person name="Park S.-Y."/>
            <person name="Proctor R.H."/>
            <person name="Regev A."/>
            <person name="Ruiz-Roldan M.C."/>
            <person name="Sain D."/>
            <person name="Sakthikumar S."/>
            <person name="Sykes S."/>
            <person name="Schwartz D.C."/>
            <person name="Turgeon B.G."/>
            <person name="Wapinski I."/>
            <person name="Yoder O."/>
            <person name="Young S."/>
            <person name="Zeng Q."/>
            <person name="Zhou S."/>
            <person name="Galagan J."/>
            <person name="Cuomo C.A."/>
            <person name="Kistler H.C."/>
            <person name="Rep M."/>
        </authorList>
    </citation>
    <scope>GENOME REANNOTATION</scope>
    <source>
        <strain>ATCC MYA-4620 / CBS 123657 / FGSC 9075 / NRRL 31084 / PH-1</strain>
    </source>
</reference>
<reference key="3">
    <citation type="journal article" date="2015" name="BMC Genomics">
        <title>The completed genome sequence of the pathogenic ascomycete fungus Fusarium graminearum.</title>
        <authorList>
            <person name="King R."/>
            <person name="Urban M."/>
            <person name="Hammond-Kosack M.C.U."/>
            <person name="Hassani-Pak K."/>
            <person name="Hammond-Kosack K.E."/>
        </authorList>
    </citation>
    <scope>NUCLEOTIDE SEQUENCE [LARGE SCALE GENOMIC DNA]</scope>
    <source>
        <strain>ATCC MYA-4620 / CBS 123657 / FGSC 9075 / NRRL 31084 / PH-1</strain>
    </source>
</reference>
<reference key="4">
    <citation type="journal article" date="2019" name="Nat. Commun.">
        <title>A phosphorylated transcription factor regulates sterol biosynthesis in Fusarium graminearum.</title>
        <authorList>
            <person name="Liu Z."/>
            <person name="Jian Y."/>
            <person name="Chen Y."/>
            <person name="Kistler H.C."/>
            <person name="He P."/>
            <person name="Ma Z."/>
            <person name="Yin Y."/>
        </authorList>
    </citation>
    <scope>FUNCTION</scope>
</reference>
<organism>
    <name type="scientific">Gibberella zeae (strain ATCC MYA-4620 / CBS 123657 / FGSC 9075 / NRRL 31084 / PH-1)</name>
    <name type="common">Wheat head blight fungus</name>
    <name type="synonym">Fusarium graminearum</name>
    <dbReference type="NCBI Taxonomy" id="229533"/>
    <lineage>
        <taxon>Eukaryota</taxon>
        <taxon>Fungi</taxon>
        <taxon>Dikarya</taxon>
        <taxon>Ascomycota</taxon>
        <taxon>Pezizomycotina</taxon>
        <taxon>Sordariomycetes</taxon>
        <taxon>Hypocreomycetidae</taxon>
        <taxon>Hypocreales</taxon>
        <taxon>Nectriaceae</taxon>
        <taxon>Fusarium</taxon>
    </lineage>
</organism>
<comment type="function">
    <text evidence="1 7">Isopentenyl-diphosphate delta-isomerase; part of the second module of ergosterol biosynthesis pathway that includes the middle steps of the pathway (By similarity). IDI1 catalyzes the 1,3-allylic rearrangement of isopentenyl (IPP) to its highly electrophilic allylic isomer, dimethylallyl diphosphate (DMAPP) (By similarity). The second module is carried out in the vacuole and involves the formation of farnesyl diphosphate, which is also an important intermediate in the biosynthesis of ubiquinone, dolichol, heme and prenylated proteins. Activity by the mevalonate kinase ERG12 (FG05912) first converts mevalonate into 5-phosphomevalonate. 5-phosphomevalonate is then further converted to 5-diphosphomevalonate by the phosphomevalonate kinase ERG8 (FG09764). The diphosphomevalonate decarboxylase ERG19 (FG10424) then produces isopentenyl diphosphate. The isopentenyl-diphosphate delta-isomerase IDI1 (FG09722) then catalyzes the 1,3-allylic rearrangement of the homoallylic substrate isopentenyl (IPP) to its highly electrophilic allylic isomer, dimethylallyl diphosphate (DMAPP). Finally the farnesyl diphosphate synthase ERG20 (FG06784) catalyzes the sequential condensation of isopentenyl pyrophosphate with dimethylallyl pyrophosphate, and then with the resultant geranylpyrophosphate to the ultimate product farnesyl pyrophosphate (Probable).</text>
</comment>
<comment type="catalytic activity">
    <reaction evidence="7">
        <text>isopentenyl diphosphate = dimethylallyl diphosphate</text>
        <dbReference type="Rhea" id="RHEA:23284"/>
        <dbReference type="ChEBI" id="CHEBI:57623"/>
        <dbReference type="ChEBI" id="CHEBI:128769"/>
        <dbReference type="EC" id="5.3.3.2"/>
    </reaction>
    <physiologicalReaction direction="left-to-right" evidence="7">
        <dbReference type="Rhea" id="RHEA:23285"/>
    </physiologicalReaction>
</comment>
<comment type="cofactor">
    <cofactor evidence="3">
        <name>Mg(2+)</name>
        <dbReference type="ChEBI" id="CHEBI:18420"/>
    </cofactor>
    <text evidence="3">Binds 1 Mg(2+) ion per subunit.</text>
</comment>
<comment type="pathway">
    <text evidence="7">Isoprenoid biosynthesis; dimethylallyl diphosphate biosynthesis; dimethylallyl diphosphate from isopentenyl diphosphate: step 1/1.</text>
</comment>
<comment type="similarity">
    <text evidence="6">Belongs to the IPP isomerase type 1 family.</text>
</comment>
<dbReference type="EC" id="5.3.3.2" evidence="7"/>
<dbReference type="EMBL" id="HG970335">
    <property type="protein sequence ID" value="CEF82937.1"/>
    <property type="molecule type" value="Genomic_DNA"/>
</dbReference>
<dbReference type="RefSeq" id="XP_011327980.1">
    <property type="nucleotide sequence ID" value="XM_011329678.1"/>
</dbReference>
<dbReference type="SMR" id="I1RZ92"/>
<dbReference type="FunCoup" id="I1RZ92">
    <property type="interactions" value="795"/>
</dbReference>
<dbReference type="STRING" id="229533.I1RZ92"/>
<dbReference type="KEGG" id="fgr:FGSG_09722"/>
<dbReference type="VEuPathDB" id="FungiDB:FGRAMPH1_01G26431"/>
<dbReference type="eggNOG" id="KOG0142">
    <property type="taxonomic scope" value="Eukaryota"/>
</dbReference>
<dbReference type="HOGENOM" id="CLU_060552_0_2_1"/>
<dbReference type="InParanoid" id="I1RZ92"/>
<dbReference type="OrthoDB" id="35963at110618"/>
<dbReference type="UniPathway" id="UPA00059">
    <property type="reaction ID" value="UER00104"/>
</dbReference>
<dbReference type="Proteomes" id="UP000070720">
    <property type="component" value="Chromosome 4"/>
</dbReference>
<dbReference type="GO" id="GO:0005737">
    <property type="term" value="C:cytoplasm"/>
    <property type="evidence" value="ECO:0007669"/>
    <property type="project" value="TreeGrafter"/>
</dbReference>
<dbReference type="GO" id="GO:0004452">
    <property type="term" value="F:isopentenyl-diphosphate delta-isomerase activity"/>
    <property type="evidence" value="ECO:0007669"/>
    <property type="project" value="UniProtKB-EC"/>
</dbReference>
<dbReference type="GO" id="GO:0046872">
    <property type="term" value="F:metal ion binding"/>
    <property type="evidence" value="ECO:0007669"/>
    <property type="project" value="UniProtKB-KW"/>
</dbReference>
<dbReference type="GO" id="GO:0050992">
    <property type="term" value="P:dimethylallyl diphosphate biosynthetic process"/>
    <property type="evidence" value="ECO:0007669"/>
    <property type="project" value="UniProtKB-UniPathway"/>
</dbReference>
<dbReference type="GO" id="GO:0009240">
    <property type="term" value="P:isopentenyl diphosphate biosynthetic process"/>
    <property type="evidence" value="ECO:0007669"/>
    <property type="project" value="TreeGrafter"/>
</dbReference>
<dbReference type="GO" id="GO:0016126">
    <property type="term" value="P:sterol biosynthetic process"/>
    <property type="evidence" value="ECO:0007669"/>
    <property type="project" value="UniProtKB-KW"/>
</dbReference>
<dbReference type="CDD" id="cd02885">
    <property type="entry name" value="NUDIX_IPP_Isomerase"/>
    <property type="match status" value="1"/>
</dbReference>
<dbReference type="FunFam" id="3.90.79.10:FF:000012">
    <property type="entry name" value="Isopentenyl-diphosphate Delta-isomerase 1"/>
    <property type="match status" value="1"/>
</dbReference>
<dbReference type="Gene3D" id="3.90.79.10">
    <property type="entry name" value="Nucleoside Triphosphate Pyrophosphohydrolase"/>
    <property type="match status" value="1"/>
</dbReference>
<dbReference type="InterPro" id="IPR011876">
    <property type="entry name" value="IsopentenylPP_isomerase_typ1"/>
</dbReference>
<dbReference type="InterPro" id="IPR015797">
    <property type="entry name" value="NUDIX_hydrolase-like_dom_sf"/>
</dbReference>
<dbReference type="InterPro" id="IPR000086">
    <property type="entry name" value="NUDIX_hydrolase_dom"/>
</dbReference>
<dbReference type="NCBIfam" id="TIGR02150">
    <property type="entry name" value="IPP_isom_1"/>
    <property type="match status" value="1"/>
</dbReference>
<dbReference type="PANTHER" id="PTHR10885">
    <property type="entry name" value="ISOPENTENYL-DIPHOSPHATE DELTA-ISOMERASE"/>
    <property type="match status" value="1"/>
</dbReference>
<dbReference type="PANTHER" id="PTHR10885:SF0">
    <property type="entry name" value="ISOPENTENYL-DIPHOSPHATE DELTA-ISOMERASE"/>
    <property type="match status" value="1"/>
</dbReference>
<dbReference type="Pfam" id="PF00293">
    <property type="entry name" value="NUDIX"/>
    <property type="match status" value="1"/>
</dbReference>
<dbReference type="PIRSF" id="PIRSF018427">
    <property type="entry name" value="Isopntndiph_ism"/>
    <property type="match status" value="1"/>
</dbReference>
<dbReference type="SUPFAM" id="SSF55811">
    <property type="entry name" value="Nudix"/>
    <property type="match status" value="1"/>
</dbReference>
<dbReference type="PROSITE" id="PS51462">
    <property type="entry name" value="NUDIX"/>
    <property type="match status" value="1"/>
</dbReference>